<gene>
    <name type="primary">gltA</name>
    <name type="ordered locus">RT0832</name>
</gene>
<reference key="1">
    <citation type="journal article" date="2004" name="J. Bacteriol.">
        <title>Complete genome sequence of Rickettsia typhi and comparison with sequences of other Rickettsiae.</title>
        <authorList>
            <person name="McLeod M.P."/>
            <person name="Qin X."/>
            <person name="Karpathy S.E."/>
            <person name="Gioia J."/>
            <person name="Highlander S.K."/>
            <person name="Fox G.E."/>
            <person name="McNeill T.Z."/>
            <person name="Jiang H."/>
            <person name="Muzny D."/>
            <person name="Jacob L.S."/>
            <person name="Hawes A.C."/>
            <person name="Sodergren E."/>
            <person name="Gill R."/>
            <person name="Hume J."/>
            <person name="Morgan M."/>
            <person name="Fan G."/>
            <person name="Amin A.G."/>
            <person name="Gibbs R.A."/>
            <person name="Hong C."/>
            <person name="Yu X.-J."/>
            <person name="Walker D.H."/>
            <person name="Weinstock G.M."/>
        </authorList>
    </citation>
    <scope>NUCLEOTIDE SEQUENCE [LARGE SCALE GENOMIC DNA]</scope>
    <source>
        <strain>ATCC VR-144 / Wilmington</strain>
    </source>
</reference>
<reference key="2">
    <citation type="journal article" date="1997" name="Int. J. Syst. Bacteriol.">
        <title>Citrate synthase gene comparison, a new tool for phylogenetic analysis, and its application for the rickettsiae.</title>
        <authorList>
            <person name="Roux V."/>
            <person name="Rydkina E."/>
            <person name="Eremeeva M."/>
            <person name="Raoult D."/>
        </authorList>
    </citation>
    <scope>NUCLEOTIDE SEQUENCE [GENOMIC DNA] OF 8-418</scope>
    <source>
        <strain>ATCC VR-144 / Wilmington</strain>
    </source>
</reference>
<reference key="3">
    <citation type="submission" date="1995-01" db="EMBL/GenBank/DDBJ databases">
        <authorList>
            <person name="Balayeva N."/>
            <person name="Eremeeva M."/>
            <person name="Tissot-Dupont H."/>
            <person name="Zakharov I."/>
            <person name="Raoult D."/>
        </authorList>
    </citation>
    <scope>NUCLEOTIDE SEQUENCE [GENOMIC DNA] OF 271-389</scope>
    <source>
        <strain>ATCC VR-144 / Wilmington</strain>
    </source>
</reference>
<name>CISY_RICTY</name>
<feature type="chain" id="PRO_0000169971" description="Citrate synthase">
    <location>
        <begin position="1"/>
        <end position="436"/>
    </location>
</feature>
<feature type="active site" evidence="1">
    <location>
        <position position="311"/>
    </location>
</feature>
<feature type="active site" evidence="1">
    <location>
        <position position="370"/>
    </location>
</feature>
<dbReference type="EC" id="2.3.3.16"/>
<dbReference type="EMBL" id="AE017197">
    <property type="protein sequence ID" value="AAU04286.1"/>
    <property type="molecule type" value="Genomic_DNA"/>
</dbReference>
<dbReference type="EMBL" id="U59714">
    <property type="protein sequence ID" value="AAB02973.1"/>
    <property type="molecule type" value="Genomic_DNA"/>
</dbReference>
<dbReference type="EMBL" id="U20245">
    <property type="protein sequence ID" value="AAA85709.1"/>
    <property type="molecule type" value="Genomic_DNA"/>
</dbReference>
<dbReference type="RefSeq" id="WP_011191260.1">
    <property type="nucleotide sequence ID" value="NC_006142.1"/>
</dbReference>
<dbReference type="SMR" id="P51043"/>
<dbReference type="KEGG" id="rty:RT0832"/>
<dbReference type="eggNOG" id="COG0372">
    <property type="taxonomic scope" value="Bacteria"/>
</dbReference>
<dbReference type="HOGENOM" id="CLU_025068_0_0_5"/>
<dbReference type="OrthoDB" id="9800864at2"/>
<dbReference type="UniPathway" id="UPA00223">
    <property type="reaction ID" value="UER00717"/>
</dbReference>
<dbReference type="Proteomes" id="UP000000604">
    <property type="component" value="Chromosome"/>
</dbReference>
<dbReference type="GO" id="GO:0005737">
    <property type="term" value="C:cytoplasm"/>
    <property type="evidence" value="ECO:0007669"/>
    <property type="project" value="InterPro"/>
</dbReference>
<dbReference type="GO" id="GO:0004108">
    <property type="term" value="F:citrate (Si)-synthase activity"/>
    <property type="evidence" value="ECO:0007669"/>
    <property type="project" value="InterPro"/>
</dbReference>
<dbReference type="GO" id="GO:0006099">
    <property type="term" value="P:tricarboxylic acid cycle"/>
    <property type="evidence" value="ECO:0007669"/>
    <property type="project" value="UniProtKB-UniPathway"/>
</dbReference>
<dbReference type="CDD" id="cd06114">
    <property type="entry name" value="EcCS_like"/>
    <property type="match status" value="1"/>
</dbReference>
<dbReference type="FunFam" id="1.10.230.10:FF:000002">
    <property type="entry name" value="Citrate synthase"/>
    <property type="match status" value="1"/>
</dbReference>
<dbReference type="Gene3D" id="2.20.28.60">
    <property type="match status" value="1"/>
</dbReference>
<dbReference type="Gene3D" id="1.10.580.10">
    <property type="entry name" value="Citrate Synthase, domain 1"/>
    <property type="match status" value="1"/>
</dbReference>
<dbReference type="Gene3D" id="1.10.230.10">
    <property type="entry name" value="Cytochrome P450-Terp, domain 2"/>
    <property type="match status" value="1"/>
</dbReference>
<dbReference type="InterPro" id="IPR016142">
    <property type="entry name" value="Citrate_synth-like_lrg_a-sub"/>
</dbReference>
<dbReference type="InterPro" id="IPR016143">
    <property type="entry name" value="Citrate_synth-like_sm_a-sub"/>
</dbReference>
<dbReference type="InterPro" id="IPR002020">
    <property type="entry name" value="Citrate_synthase"/>
</dbReference>
<dbReference type="InterPro" id="IPR019810">
    <property type="entry name" value="Citrate_synthase_AS"/>
</dbReference>
<dbReference type="InterPro" id="IPR024176">
    <property type="entry name" value="Citrate_synthase_bac-typ"/>
</dbReference>
<dbReference type="InterPro" id="IPR036969">
    <property type="entry name" value="Citrate_synthase_sf"/>
</dbReference>
<dbReference type="InterPro" id="IPR010953">
    <property type="entry name" value="Citrate_synthase_typ-I"/>
</dbReference>
<dbReference type="NCBIfam" id="TIGR01798">
    <property type="entry name" value="cit_synth_I"/>
    <property type="match status" value="1"/>
</dbReference>
<dbReference type="NCBIfam" id="NF004126">
    <property type="entry name" value="PRK05614.1"/>
    <property type="match status" value="1"/>
</dbReference>
<dbReference type="PANTHER" id="PTHR42871">
    <property type="entry name" value="CITRATE SYNTHASE"/>
    <property type="match status" value="1"/>
</dbReference>
<dbReference type="PANTHER" id="PTHR42871:SF1">
    <property type="entry name" value="CITRATE SYNTHASE"/>
    <property type="match status" value="1"/>
</dbReference>
<dbReference type="Pfam" id="PF00285">
    <property type="entry name" value="Citrate_synt"/>
    <property type="match status" value="1"/>
</dbReference>
<dbReference type="PIRSF" id="PIRSF001369">
    <property type="entry name" value="Citrate_synth"/>
    <property type="match status" value="1"/>
</dbReference>
<dbReference type="PRINTS" id="PR00143">
    <property type="entry name" value="CITRTSNTHASE"/>
</dbReference>
<dbReference type="SUPFAM" id="SSF48256">
    <property type="entry name" value="Citrate synthase"/>
    <property type="match status" value="1"/>
</dbReference>
<dbReference type="PROSITE" id="PS00480">
    <property type="entry name" value="CITRATE_SYNTHASE"/>
    <property type="match status" value="1"/>
</dbReference>
<evidence type="ECO:0000255" key="1">
    <source>
        <dbReference type="PROSITE-ProRule" id="PRU10117"/>
    </source>
</evidence>
<evidence type="ECO:0000305" key="2"/>
<accession>P51043</accession>
<accession>Q68VS0</accession>
<sequence>MTNGNNNNLEFAELKIRGKMFKLPILKASIGKDVIDISRVSAEADCFTYDPGFMSTASCQSTITYIDGDKGILWHRGYDIKDLAEKSDFLEVAYLMIYGELPSSEQYHNFTTKIAHHALVNERLHYLFQTFCSSSHPMAIMLAAVGSLSAFYPDLLNFNETDYELTAIRMIAKIPTIAAMSYKYSIGQPFIYPDNSLDFTENFLHMMFATPCTKYKVNPIIKNALNKIFILHADHEQNASTSTVRIAGSSGANPFACISTGIASLWGPAHGGANEAVINMLKEIGSSENIPKYVAKAKDKNDPFRLMGFGHRVYKSYDPRAAVLKETCKEVLNELGQLENNPLLQIAIELEALALKDEYFIERKLYPNVDFYSGIIYKAMGIPSQMFTVLFAIARTVGWMAQWKEMHEDPEQKISRPRQLYTGYVHREYKCIVERK</sequence>
<keyword id="KW-0012">Acyltransferase</keyword>
<keyword id="KW-0808">Transferase</keyword>
<keyword id="KW-0816">Tricarboxylic acid cycle</keyword>
<proteinExistence type="inferred from homology"/>
<comment type="catalytic activity">
    <reaction evidence="1">
        <text>oxaloacetate + acetyl-CoA + H2O = citrate + CoA + H(+)</text>
        <dbReference type="Rhea" id="RHEA:16845"/>
        <dbReference type="ChEBI" id="CHEBI:15377"/>
        <dbReference type="ChEBI" id="CHEBI:15378"/>
        <dbReference type="ChEBI" id="CHEBI:16452"/>
        <dbReference type="ChEBI" id="CHEBI:16947"/>
        <dbReference type="ChEBI" id="CHEBI:57287"/>
        <dbReference type="ChEBI" id="CHEBI:57288"/>
        <dbReference type="EC" id="2.3.3.16"/>
    </reaction>
</comment>
<comment type="pathway">
    <text>Carbohydrate metabolism; tricarboxylic acid cycle; isocitrate from oxaloacetate: step 1/2.</text>
</comment>
<comment type="miscellaneous">
    <text>Citrate synthase is found in nearly all cells capable of oxidative metabolism.</text>
</comment>
<comment type="similarity">
    <text evidence="2">Belongs to the citrate synthase family.</text>
</comment>
<organism>
    <name type="scientific">Rickettsia typhi (strain ATCC VR-144 / Wilmington)</name>
    <dbReference type="NCBI Taxonomy" id="257363"/>
    <lineage>
        <taxon>Bacteria</taxon>
        <taxon>Pseudomonadati</taxon>
        <taxon>Pseudomonadota</taxon>
        <taxon>Alphaproteobacteria</taxon>
        <taxon>Rickettsiales</taxon>
        <taxon>Rickettsiaceae</taxon>
        <taxon>Rickettsieae</taxon>
        <taxon>Rickettsia</taxon>
        <taxon>typhus group</taxon>
    </lineage>
</organism>
<protein>
    <recommendedName>
        <fullName>Citrate synthase</fullName>
        <ecNumber>2.3.3.16</ecNumber>
    </recommendedName>
</protein>